<sequence length="77" mass="8627">MSRAYLADNDKGWAKKKGADSHATPRPHKQTKMNKLKEIDTDQFLVPPVNAFKLDLDGDIRRGGNKKSERVSGFSGR</sequence>
<evidence type="ECO:0000256" key="1">
    <source>
        <dbReference type="SAM" id="MobiDB-lite"/>
    </source>
</evidence>
<feature type="chain" id="PRO_0000352430" description="Uncharacterized protein DDB_G0280919">
    <location>
        <begin position="1"/>
        <end position="77"/>
    </location>
</feature>
<feature type="region of interest" description="Disordered" evidence="1">
    <location>
        <begin position="1"/>
        <end position="34"/>
    </location>
</feature>
<feature type="region of interest" description="Disordered" evidence="1">
    <location>
        <begin position="56"/>
        <end position="77"/>
    </location>
</feature>
<feature type="compositionally biased region" description="Basic and acidic residues" evidence="1">
    <location>
        <begin position="8"/>
        <end position="20"/>
    </location>
</feature>
<feature type="compositionally biased region" description="Basic residues" evidence="1">
    <location>
        <begin position="25"/>
        <end position="34"/>
    </location>
</feature>
<feature type="compositionally biased region" description="Basic and acidic residues" evidence="1">
    <location>
        <begin position="56"/>
        <end position="70"/>
    </location>
</feature>
<gene>
    <name type="ORF">DDB_G0280919</name>
</gene>
<keyword id="KW-1185">Reference proteome</keyword>
<protein>
    <recommendedName>
        <fullName>Uncharacterized protein DDB_G0280919</fullName>
    </recommendedName>
</protein>
<name>Y5256_DICDI</name>
<organism>
    <name type="scientific">Dictyostelium discoideum</name>
    <name type="common">Social amoeba</name>
    <dbReference type="NCBI Taxonomy" id="44689"/>
    <lineage>
        <taxon>Eukaryota</taxon>
        <taxon>Amoebozoa</taxon>
        <taxon>Evosea</taxon>
        <taxon>Eumycetozoa</taxon>
        <taxon>Dictyostelia</taxon>
        <taxon>Dictyosteliales</taxon>
        <taxon>Dictyosteliaceae</taxon>
        <taxon>Dictyostelium</taxon>
    </lineage>
</organism>
<accession>Q54UN8</accession>
<reference key="1">
    <citation type="journal article" date="2005" name="Nature">
        <title>The genome of the social amoeba Dictyostelium discoideum.</title>
        <authorList>
            <person name="Eichinger L."/>
            <person name="Pachebat J.A."/>
            <person name="Gloeckner G."/>
            <person name="Rajandream M.A."/>
            <person name="Sucgang R."/>
            <person name="Berriman M."/>
            <person name="Song J."/>
            <person name="Olsen R."/>
            <person name="Szafranski K."/>
            <person name="Xu Q."/>
            <person name="Tunggal B."/>
            <person name="Kummerfeld S."/>
            <person name="Madera M."/>
            <person name="Konfortov B.A."/>
            <person name="Rivero F."/>
            <person name="Bankier A.T."/>
            <person name="Lehmann R."/>
            <person name="Hamlin N."/>
            <person name="Davies R."/>
            <person name="Gaudet P."/>
            <person name="Fey P."/>
            <person name="Pilcher K."/>
            <person name="Chen G."/>
            <person name="Saunders D."/>
            <person name="Sodergren E.J."/>
            <person name="Davis P."/>
            <person name="Kerhornou A."/>
            <person name="Nie X."/>
            <person name="Hall N."/>
            <person name="Anjard C."/>
            <person name="Hemphill L."/>
            <person name="Bason N."/>
            <person name="Farbrother P."/>
            <person name="Desany B."/>
            <person name="Just E."/>
            <person name="Morio T."/>
            <person name="Rost R."/>
            <person name="Churcher C.M."/>
            <person name="Cooper J."/>
            <person name="Haydock S."/>
            <person name="van Driessche N."/>
            <person name="Cronin A."/>
            <person name="Goodhead I."/>
            <person name="Muzny D.M."/>
            <person name="Mourier T."/>
            <person name="Pain A."/>
            <person name="Lu M."/>
            <person name="Harper D."/>
            <person name="Lindsay R."/>
            <person name="Hauser H."/>
            <person name="James K.D."/>
            <person name="Quiles M."/>
            <person name="Madan Babu M."/>
            <person name="Saito T."/>
            <person name="Buchrieser C."/>
            <person name="Wardroper A."/>
            <person name="Felder M."/>
            <person name="Thangavelu M."/>
            <person name="Johnson D."/>
            <person name="Knights A."/>
            <person name="Loulseged H."/>
            <person name="Mungall K.L."/>
            <person name="Oliver K."/>
            <person name="Price C."/>
            <person name="Quail M.A."/>
            <person name="Urushihara H."/>
            <person name="Hernandez J."/>
            <person name="Rabbinowitsch E."/>
            <person name="Steffen D."/>
            <person name="Sanders M."/>
            <person name="Ma J."/>
            <person name="Kohara Y."/>
            <person name="Sharp S."/>
            <person name="Simmonds M.N."/>
            <person name="Spiegler S."/>
            <person name="Tivey A."/>
            <person name="Sugano S."/>
            <person name="White B."/>
            <person name="Walker D."/>
            <person name="Woodward J.R."/>
            <person name="Winckler T."/>
            <person name="Tanaka Y."/>
            <person name="Shaulsky G."/>
            <person name="Schleicher M."/>
            <person name="Weinstock G.M."/>
            <person name="Rosenthal A."/>
            <person name="Cox E.C."/>
            <person name="Chisholm R.L."/>
            <person name="Gibbs R.A."/>
            <person name="Loomis W.F."/>
            <person name="Platzer M."/>
            <person name="Kay R.R."/>
            <person name="Williams J.G."/>
            <person name="Dear P.H."/>
            <person name="Noegel A.A."/>
            <person name="Barrell B.G."/>
            <person name="Kuspa A."/>
        </authorList>
    </citation>
    <scope>NUCLEOTIDE SEQUENCE [LARGE SCALE GENOMIC DNA]</scope>
    <source>
        <strain>AX4</strain>
    </source>
</reference>
<proteinExistence type="predicted"/>
<dbReference type="EMBL" id="AAFI02000039">
    <property type="protein sequence ID" value="EAL67001.1"/>
    <property type="molecule type" value="Genomic_DNA"/>
</dbReference>
<dbReference type="RefSeq" id="XP_640983.1">
    <property type="nucleotide sequence ID" value="XM_635891.1"/>
</dbReference>
<dbReference type="FunCoup" id="Q54UN8">
    <property type="interactions" value="363"/>
</dbReference>
<dbReference type="PaxDb" id="44689-DDB0215256"/>
<dbReference type="EnsemblProtists" id="EAL67001">
    <property type="protein sequence ID" value="EAL67001"/>
    <property type="gene ID" value="DDB_G0280919"/>
</dbReference>
<dbReference type="GeneID" id="8622789"/>
<dbReference type="KEGG" id="ddi:DDB_G0280919"/>
<dbReference type="dictyBase" id="DDB_G0280919"/>
<dbReference type="VEuPathDB" id="AmoebaDB:DDB_G0280919"/>
<dbReference type="eggNOG" id="ENOG502RIEV">
    <property type="taxonomic scope" value="Eukaryota"/>
</dbReference>
<dbReference type="HOGENOM" id="CLU_2643197_0_0_1"/>
<dbReference type="InParanoid" id="Q54UN8"/>
<dbReference type="OMA" id="HATPRPH"/>
<dbReference type="PRO" id="PR:Q54UN8"/>
<dbReference type="Proteomes" id="UP000002195">
    <property type="component" value="Chromosome 3"/>
</dbReference>